<organism>
    <name type="scientific">Cupriavidus metallidurans (strain ATCC 43123 / DSM 2839 / NBRC 102507 / CH34)</name>
    <name type="common">Ralstonia metallidurans</name>
    <dbReference type="NCBI Taxonomy" id="266264"/>
    <lineage>
        <taxon>Bacteria</taxon>
        <taxon>Pseudomonadati</taxon>
        <taxon>Pseudomonadota</taxon>
        <taxon>Betaproteobacteria</taxon>
        <taxon>Burkholderiales</taxon>
        <taxon>Burkholderiaceae</taxon>
        <taxon>Cupriavidus</taxon>
    </lineage>
</organism>
<reference key="1">
    <citation type="journal article" date="2010" name="PLoS ONE">
        <title>The complete genome sequence of Cupriavidus metallidurans strain CH34, a master survivalist in harsh and anthropogenic environments.</title>
        <authorList>
            <person name="Janssen P.J."/>
            <person name="Van Houdt R."/>
            <person name="Moors H."/>
            <person name="Monsieurs P."/>
            <person name="Morin N."/>
            <person name="Michaux A."/>
            <person name="Benotmane M.A."/>
            <person name="Leys N."/>
            <person name="Vallaeys T."/>
            <person name="Lapidus A."/>
            <person name="Monchy S."/>
            <person name="Medigue C."/>
            <person name="Taghavi S."/>
            <person name="McCorkle S."/>
            <person name="Dunn J."/>
            <person name="van der Lelie D."/>
            <person name="Mergeay M."/>
        </authorList>
    </citation>
    <scope>NUCLEOTIDE SEQUENCE [LARGE SCALE GENOMIC DNA]</scope>
    <source>
        <strain>ATCC 43123 / DSM 2839 / NBRC 102507 / CH34</strain>
    </source>
</reference>
<keyword id="KW-0548">Nucleotidyltransferase</keyword>
<keyword id="KW-1185">Reference proteome</keyword>
<keyword id="KW-0694">RNA-binding</keyword>
<keyword id="KW-0698">rRNA processing</keyword>
<keyword id="KW-0808">Transferase</keyword>
<keyword id="KW-0819">tRNA processing</keyword>
<keyword id="KW-0820">tRNA-binding</keyword>
<protein>
    <recommendedName>
        <fullName evidence="1">Ribonuclease PH</fullName>
        <shortName evidence="1">RNase PH</shortName>
        <ecNumber evidence="1">2.7.7.56</ecNumber>
    </recommendedName>
    <alternativeName>
        <fullName evidence="1">tRNA nucleotidyltransferase</fullName>
    </alternativeName>
</protein>
<name>RNPH_CUPMC</name>
<comment type="function">
    <text evidence="1">Phosphorolytic 3'-5' exoribonuclease that plays an important role in tRNA 3'-end maturation. Removes nucleotide residues following the 3'-CCA terminus of tRNAs; can also add nucleotides to the ends of RNA molecules by using nucleoside diphosphates as substrates, but this may not be physiologically important. Probably plays a role in initiation of 16S rRNA degradation (leading to ribosome degradation) during starvation.</text>
</comment>
<comment type="catalytic activity">
    <reaction evidence="1">
        <text>tRNA(n+1) + phosphate = tRNA(n) + a ribonucleoside 5'-diphosphate</text>
        <dbReference type="Rhea" id="RHEA:10628"/>
        <dbReference type="Rhea" id="RHEA-COMP:17343"/>
        <dbReference type="Rhea" id="RHEA-COMP:17344"/>
        <dbReference type="ChEBI" id="CHEBI:43474"/>
        <dbReference type="ChEBI" id="CHEBI:57930"/>
        <dbReference type="ChEBI" id="CHEBI:173114"/>
        <dbReference type="EC" id="2.7.7.56"/>
    </reaction>
</comment>
<comment type="subunit">
    <text evidence="1">Homohexameric ring arranged as a trimer of dimers.</text>
</comment>
<comment type="similarity">
    <text evidence="1">Belongs to the RNase PH family.</text>
</comment>
<accession>Q1LQ38</accession>
<evidence type="ECO:0000255" key="1">
    <source>
        <dbReference type="HAMAP-Rule" id="MF_00564"/>
    </source>
</evidence>
<gene>
    <name evidence="1" type="primary">rph</name>
    <name type="ordered locus">Rmet_0852</name>
</gene>
<dbReference type="EC" id="2.7.7.56" evidence="1"/>
<dbReference type="EMBL" id="CP000352">
    <property type="protein sequence ID" value="ABF07738.1"/>
    <property type="molecule type" value="Genomic_DNA"/>
</dbReference>
<dbReference type="RefSeq" id="WP_011515680.1">
    <property type="nucleotide sequence ID" value="NC_007973.1"/>
</dbReference>
<dbReference type="SMR" id="Q1LQ38"/>
<dbReference type="STRING" id="266264.Rmet_0852"/>
<dbReference type="GeneID" id="60825336"/>
<dbReference type="KEGG" id="rme:Rmet_0852"/>
<dbReference type="eggNOG" id="COG0689">
    <property type="taxonomic scope" value="Bacteria"/>
</dbReference>
<dbReference type="HOGENOM" id="CLU_050858_0_0_4"/>
<dbReference type="Proteomes" id="UP000002429">
    <property type="component" value="Chromosome"/>
</dbReference>
<dbReference type="GO" id="GO:0000175">
    <property type="term" value="F:3'-5'-RNA exonuclease activity"/>
    <property type="evidence" value="ECO:0007669"/>
    <property type="project" value="UniProtKB-UniRule"/>
</dbReference>
<dbReference type="GO" id="GO:0000049">
    <property type="term" value="F:tRNA binding"/>
    <property type="evidence" value="ECO:0007669"/>
    <property type="project" value="UniProtKB-UniRule"/>
</dbReference>
<dbReference type="GO" id="GO:0009022">
    <property type="term" value="F:tRNA nucleotidyltransferase activity"/>
    <property type="evidence" value="ECO:0007669"/>
    <property type="project" value="UniProtKB-UniRule"/>
</dbReference>
<dbReference type="GO" id="GO:0016075">
    <property type="term" value="P:rRNA catabolic process"/>
    <property type="evidence" value="ECO:0007669"/>
    <property type="project" value="UniProtKB-UniRule"/>
</dbReference>
<dbReference type="GO" id="GO:0006364">
    <property type="term" value="P:rRNA processing"/>
    <property type="evidence" value="ECO:0007669"/>
    <property type="project" value="UniProtKB-KW"/>
</dbReference>
<dbReference type="GO" id="GO:0008033">
    <property type="term" value="P:tRNA processing"/>
    <property type="evidence" value="ECO:0007669"/>
    <property type="project" value="UniProtKB-UniRule"/>
</dbReference>
<dbReference type="CDD" id="cd11362">
    <property type="entry name" value="RNase_PH_bact"/>
    <property type="match status" value="1"/>
</dbReference>
<dbReference type="FunFam" id="3.30.230.70:FF:000003">
    <property type="entry name" value="Ribonuclease PH"/>
    <property type="match status" value="1"/>
</dbReference>
<dbReference type="Gene3D" id="3.30.230.70">
    <property type="entry name" value="GHMP Kinase, N-terminal domain"/>
    <property type="match status" value="1"/>
</dbReference>
<dbReference type="HAMAP" id="MF_00564">
    <property type="entry name" value="RNase_PH"/>
    <property type="match status" value="1"/>
</dbReference>
<dbReference type="InterPro" id="IPR001247">
    <property type="entry name" value="ExoRNase_PH_dom1"/>
</dbReference>
<dbReference type="InterPro" id="IPR015847">
    <property type="entry name" value="ExoRNase_PH_dom2"/>
</dbReference>
<dbReference type="InterPro" id="IPR036345">
    <property type="entry name" value="ExoRNase_PH_dom2_sf"/>
</dbReference>
<dbReference type="InterPro" id="IPR027408">
    <property type="entry name" value="PNPase/RNase_PH_dom_sf"/>
</dbReference>
<dbReference type="InterPro" id="IPR020568">
    <property type="entry name" value="Ribosomal_Su5_D2-typ_SF"/>
</dbReference>
<dbReference type="InterPro" id="IPR050080">
    <property type="entry name" value="RNase_PH"/>
</dbReference>
<dbReference type="InterPro" id="IPR002381">
    <property type="entry name" value="RNase_PH_bac-type"/>
</dbReference>
<dbReference type="InterPro" id="IPR018336">
    <property type="entry name" value="RNase_PH_CS"/>
</dbReference>
<dbReference type="NCBIfam" id="TIGR01966">
    <property type="entry name" value="RNasePH"/>
    <property type="match status" value="1"/>
</dbReference>
<dbReference type="PANTHER" id="PTHR11953">
    <property type="entry name" value="EXOSOME COMPLEX COMPONENT"/>
    <property type="match status" value="1"/>
</dbReference>
<dbReference type="PANTHER" id="PTHR11953:SF0">
    <property type="entry name" value="EXOSOME COMPLEX COMPONENT RRP41"/>
    <property type="match status" value="1"/>
</dbReference>
<dbReference type="Pfam" id="PF01138">
    <property type="entry name" value="RNase_PH"/>
    <property type="match status" value="1"/>
</dbReference>
<dbReference type="Pfam" id="PF03725">
    <property type="entry name" value="RNase_PH_C"/>
    <property type="match status" value="1"/>
</dbReference>
<dbReference type="SUPFAM" id="SSF55666">
    <property type="entry name" value="Ribonuclease PH domain 2-like"/>
    <property type="match status" value="1"/>
</dbReference>
<dbReference type="SUPFAM" id="SSF54211">
    <property type="entry name" value="Ribosomal protein S5 domain 2-like"/>
    <property type="match status" value="1"/>
</dbReference>
<dbReference type="PROSITE" id="PS01277">
    <property type="entry name" value="RIBONUCLEASE_PH"/>
    <property type="match status" value="1"/>
</dbReference>
<feature type="chain" id="PRO_1000024860" description="Ribonuclease PH">
    <location>
        <begin position="1"/>
        <end position="238"/>
    </location>
</feature>
<feature type="binding site" evidence="1">
    <location>
        <position position="86"/>
    </location>
    <ligand>
        <name>phosphate</name>
        <dbReference type="ChEBI" id="CHEBI:43474"/>
        <note>substrate</note>
    </ligand>
</feature>
<feature type="binding site" evidence="1">
    <location>
        <begin position="124"/>
        <end position="126"/>
    </location>
    <ligand>
        <name>phosphate</name>
        <dbReference type="ChEBI" id="CHEBI:43474"/>
        <note>substrate</note>
    </ligand>
</feature>
<sequence length="238" mass="25242">MRPSGRAADALRPITLTRQYTRHAEGSVLSAFGDTKVLCTASVLAKVPPHKKGSGEGWVTAEYGMLPRATHTRSDREAARGKQTGRTQEIQRLIGRAMRSVFDLAALGEYTIHLDCDVLQADGGTRTAAITGAFVAAHDAVSAMLRDGQIKASPIRDFVAAVSVGMVNGVPVLDLDYAEDSNCDTDMNVVMTGSGGFVEVQGTAEGTPFSRADLDAMTRLAEAGIAELVRHQKQALGL</sequence>
<proteinExistence type="inferred from homology"/>